<accession>O94260</accession>
<organism>
    <name type="scientific">Schizosaccharomyces pombe (strain 972 / ATCC 24843)</name>
    <name type="common">Fission yeast</name>
    <dbReference type="NCBI Taxonomy" id="284812"/>
    <lineage>
        <taxon>Eukaryota</taxon>
        <taxon>Fungi</taxon>
        <taxon>Dikarya</taxon>
        <taxon>Ascomycota</taxon>
        <taxon>Taphrinomycotina</taxon>
        <taxon>Schizosaccharomycetes</taxon>
        <taxon>Schizosaccharomycetales</taxon>
        <taxon>Schizosaccharomycetaceae</taxon>
        <taxon>Schizosaccharomyces</taxon>
    </lineage>
</organism>
<gene>
    <name type="primary">nxt3</name>
    <name type="ORF">SPBP8B7.11</name>
</gene>
<proteinExistence type="evidence at protein level"/>
<keyword id="KW-0509">mRNA transport</keyword>
<keyword id="KW-0597">Phosphoprotein</keyword>
<keyword id="KW-1185">Reference proteome</keyword>
<keyword id="KW-0694">RNA-binding</keyword>
<keyword id="KW-0813">Transport</keyword>
<name>G3BP_SCHPO</name>
<sequence length="434" mass="47972">MTAENATLLEPVLGKDEIGWMFVQEYYTYLNKEPNRLHCFYTKKSTLIHGDEGESISLCHGQQEIHNKILDLDFQNCKVLISNVDSLASSNGGIVIQVLGEMSNKGKLSRKFAQTFFLAEQPNGYFVLNDIFRFLREDVEEEEESPDAVEKEKKDVASEPYVNGVQSQEHLPSAKEEGHYQDPAATENNFATAALISNETDSLNQATLAVPEEPVIQVTEASVPSFVSQQENQLQDEALTSNSKNADAIGASDANVATAPKSWADLIARNHPDVKSQASVSSTASTTGQTVKGVNADQTQQPTAPYTQSNELLETSVFVKNIPPETSDVSLKSAMSIFGPVKAIEFARRKGTAYVDFVNHECVQLALNKKTLQINNATLNIEERRRLFSGKFNKSGDKKSNDNYNGMKRNFRKGNRGAFDGRSKEVTTSKKQNN</sequence>
<protein>
    <recommendedName>
        <fullName>Putative G3BP-like protein</fullName>
    </recommendedName>
</protein>
<reference key="1">
    <citation type="journal article" date="2002" name="Nature">
        <title>The genome sequence of Schizosaccharomyces pombe.</title>
        <authorList>
            <person name="Wood V."/>
            <person name="Gwilliam R."/>
            <person name="Rajandream M.A."/>
            <person name="Lyne M.H."/>
            <person name="Lyne R."/>
            <person name="Stewart A."/>
            <person name="Sgouros J.G."/>
            <person name="Peat N."/>
            <person name="Hayles J."/>
            <person name="Baker S.G."/>
            <person name="Basham D."/>
            <person name="Bowman S."/>
            <person name="Brooks K."/>
            <person name="Brown D."/>
            <person name="Brown S."/>
            <person name="Chillingworth T."/>
            <person name="Churcher C.M."/>
            <person name="Collins M."/>
            <person name="Connor R."/>
            <person name="Cronin A."/>
            <person name="Davis P."/>
            <person name="Feltwell T."/>
            <person name="Fraser A."/>
            <person name="Gentles S."/>
            <person name="Goble A."/>
            <person name="Hamlin N."/>
            <person name="Harris D.E."/>
            <person name="Hidalgo J."/>
            <person name="Hodgson G."/>
            <person name="Holroyd S."/>
            <person name="Hornsby T."/>
            <person name="Howarth S."/>
            <person name="Huckle E.J."/>
            <person name="Hunt S."/>
            <person name="Jagels K."/>
            <person name="James K.D."/>
            <person name="Jones L."/>
            <person name="Jones M."/>
            <person name="Leather S."/>
            <person name="McDonald S."/>
            <person name="McLean J."/>
            <person name="Mooney P."/>
            <person name="Moule S."/>
            <person name="Mungall K.L."/>
            <person name="Murphy L.D."/>
            <person name="Niblett D."/>
            <person name="Odell C."/>
            <person name="Oliver K."/>
            <person name="O'Neil S."/>
            <person name="Pearson D."/>
            <person name="Quail M.A."/>
            <person name="Rabbinowitsch E."/>
            <person name="Rutherford K.M."/>
            <person name="Rutter S."/>
            <person name="Saunders D."/>
            <person name="Seeger K."/>
            <person name="Sharp S."/>
            <person name="Skelton J."/>
            <person name="Simmonds M.N."/>
            <person name="Squares R."/>
            <person name="Squares S."/>
            <person name="Stevens K."/>
            <person name="Taylor K."/>
            <person name="Taylor R.G."/>
            <person name="Tivey A."/>
            <person name="Walsh S.V."/>
            <person name="Warren T."/>
            <person name="Whitehead S."/>
            <person name="Woodward J.R."/>
            <person name="Volckaert G."/>
            <person name="Aert R."/>
            <person name="Robben J."/>
            <person name="Grymonprez B."/>
            <person name="Weltjens I."/>
            <person name="Vanstreels E."/>
            <person name="Rieger M."/>
            <person name="Schaefer M."/>
            <person name="Mueller-Auer S."/>
            <person name="Gabel C."/>
            <person name="Fuchs M."/>
            <person name="Duesterhoeft A."/>
            <person name="Fritzc C."/>
            <person name="Holzer E."/>
            <person name="Moestl D."/>
            <person name="Hilbert H."/>
            <person name="Borzym K."/>
            <person name="Langer I."/>
            <person name="Beck A."/>
            <person name="Lehrach H."/>
            <person name="Reinhardt R."/>
            <person name="Pohl T.M."/>
            <person name="Eger P."/>
            <person name="Zimmermann W."/>
            <person name="Wedler H."/>
            <person name="Wambutt R."/>
            <person name="Purnelle B."/>
            <person name="Goffeau A."/>
            <person name="Cadieu E."/>
            <person name="Dreano S."/>
            <person name="Gloux S."/>
            <person name="Lelaure V."/>
            <person name="Mottier S."/>
            <person name="Galibert F."/>
            <person name="Aves S.J."/>
            <person name="Xiang Z."/>
            <person name="Hunt C."/>
            <person name="Moore K."/>
            <person name="Hurst S.M."/>
            <person name="Lucas M."/>
            <person name="Rochet M."/>
            <person name="Gaillardin C."/>
            <person name="Tallada V.A."/>
            <person name="Garzon A."/>
            <person name="Thode G."/>
            <person name="Daga R.R."/>
            <person name="Cruzado L."/>
            <person name="Jimenez J."/>
            <person name="Sanchez M."/>
            <person name="del Rey F."/>
            <person name="Benito J."/>
            <person name="Dominguez A."/>
            <person name="Revuelta J.L."/>
            <person name="Moreno S."/>
            <person name="Armstrong J."/>
            <person name="Forsburg S.L."/>
            <person name="Cerutti L."/>
            <person name="Lowe T."/>
            <person name="McCombie W.R."/>
            <person name="Paulsen I."/>
            <person name="Potashkin J."/>
            <person name="Shpakovski G.V."/>
            <person name="Ussery D."/>
            <person name="Barrell B.G."/>
            <person name="Nurse P."/>
        </authorList>
    </citation>
    <scope>NUCLEOTIDE SEQUENCE [LARGE SCALE GENOMIC DNA]</scope>
    <source>
        <strain>972 / ATCC 24843</strain>
    </source>
</reference>
<reference key="2">
    <citation type="journal article" date="2008" name="J. Proteome Res.">
        <title>Phosphoproteome analysis of fission yeast.</title>
        <authorList>
            <person name="Wilson-Grady J.T."/>
            <person name="Villen J."/>
            <person name="Gygi S.P."/>
        </authorList>
    </citation>
    <scope>PHOSPHORYLATION [LARGE SCALE ANALYSIS] AT SER-145</scope>
    <scope>IDENTIFICATION BY MASS SPECTROMETRY</scope>
</reference>
<feature type="chain" id="PRO_0000194802" description="Putative G3BP-like protein">
    <location>
        <begin position="1"/>
        <end position="434"/>
    </location>
</feature>
<feature type="domain" description="NTF2" evidence="1">
    <location>
        <begin position="18"/>
        <end position="134"/>
    </location>
</feature>
<feature type="domain" description="RRM" evidence="2">
    <location>
        <begin position="315"/>
        <end position="386"/>
    </location>
</feature>
<feature type="region of interest" description="Disordered" evidence="3">
    <location>
        <begin position="141"/>
        <end position="180"/>
    </location>
</feature>
<feature type="region of interest" description="Disordered" evidence="3">
    <location>
        <begin position="274"/>
        <end position="308"/>
    </location>
</feature>
<feature type="region of interest" description="Disordered" evidence="3">
    <location>
        <begin position="390"/>
        <end position="434"/>
    </location>
</feature>
<feature type="compositionally biased region" description="Basic and acidic residues" evidence="3">
    <location>
        <begin position="148"/>
        <end position="157"/>
    </location>
</feature>
<feature type="compositionally biased region" description="Low complexity" evidence="3">
    <location>
        <begin position="276"/>
        <end position="291"/>
    </location>
</feature>
<feature type="compositionally biased region" description="Polar residues" evidence="3">
    <location>
        <begin position="296"/>
        <end position="308"/>
    </location>
</feature>
<feature type="compositionally biased region" description="Basic and acidic residues" evidence="3">
    <location>
        <begin position="419"/>
        <end position="428"/>
    </location>
</feature>
<feature type="modified residue" description="Phosphoserine" evidence="4">
    <location>
        <position position="145"/>
    </location>
</feature>
<dbReference type="EMBL" id="CU329671">
    <property type="protein sequence ID" value="CAA21796.1"/>
    <property type="molecule type" value="Genomic_DNA"/>
</dbReference>
<dbReference type="PIR" id="T40805">
    <property type="entry name" value="T40805"/>
</dbReference>
<dbReference type="RefSeq" id="NP_596518.1">
    <property type="nucleotide sequence ID" value="NM_001022439.2"/>
</dbReference>
<dbReference type="SMR" id="O94260"/>
<dbReference type="BioGRID" id="277875">
    <property type="interactions" value="14"/>
</dbReference>
<dbReference type="FunCoup" id="O94260">
    <property type="interactions" value="336"/>
</dbReference>
<dbReference type="IntAct" id="O94260">
    <property type="interactions" value="1"/>
</dbReference>
<dbReference type="STRING" id="284812.O94260"/>
<dbReference type="iPTMnet" id="O94260"/>
<dbReference type="PaxDb" id="4896-SPBP8B7.11.1"/>
<dbReference type="EnsemblFungi" id="SPBP8B7.11.1">
    <property type="protein sequence ID" value="SPBP8B7.11.1:pep"/>
    <property type="gene ID" value="SPBP8B7.11"/>
</dbReference>
<dbReference type="GeneID" id="2541364"/>
<dbReference type="KEGG" id="spo:2541364"/>
<dbReference type="PomBase" id="SPBP8B7.11">
    <property type="gene designation" value="nxt3"/>
</dbReference>
<dbReference type="VEuPathDB" id="FungiDB:SPBP8B7.11"/>
<dbReference type="eggNOG" id="KOG0116">
    <property type="taxonomic scope" value="Eukaryota"/>
</dbReference>
<dbReference type="HOGENOM" id="CLU_022209_2_1_1"/>
<dbReference type="InParanoid" id="O94260"/>
<dbReference type="OMA" id="YGQMDIN"/>
<dbReference type="PhylomeDB" id="O94260"/>
<dbReference type="CD-CODE" id="F5301D48">
    <property type="entry name" value="Stress granule"/>
</dbReference>
<dbReference type="PRO" id="PR:O94260"/>
<dbReference type="Proteomes" id="UP000002485">
    <property type="component" value="Chromosome II"/>
</dbReference>
<dbReference type="GO" id="GO:0010494">
    <property type="term" value="C:cytoplasmic stress granule"/>
    <property type="evidence" value="ECO:0000269"/>
    <property type="project" value="PomBase"/>
</dbReference>
<dbReference type="GO" id="GO:0005829">
    <property type="term" value="C:cytosol"/>
    <property type="evidence" value="ECO:0007005"/>
    <property type="project" value="PomBase"/>
</dbReference>
<dbReference type="GO" id="GO:1990861">
    <property type="term" value="C:Ubp3-Bre5 deubiquitination complex"/>
    <property type="evidence" value="ECO:0000318"/>
    <property type="project" value="GO_Central"/>
</dbReference>
<dbReference type="GO" id="GO:0003729">
    <property type="term" value="F:mRNA binding"/>
    <property type="evidence" value="ECO:0000318"/>
    <property type="project" value="GO_Central"/>
</dbReference>
<dbReference type="GO" id="GO:0051028">
    <property type="term" value="P:mRNA transport"/>
    <property type="evidence" value="ECO:0007669"/>
    <property type="project" value="UniProtKB-KW"/>
</dbReference>
<dbReference type="GO" id="GO:0034063">
    <property type="term" value="P:stress granule assembly"/>
    <property type="evidence" value="ECO:0000318"/>
    <property type="project" value="GO_Central"/>
</dbReference>
<dbReference type="CDD" id="cd00780">
    <property type="entry name" value="NTF2"/>
    <property type="match status" value="1"/>
</dbReference>
<dbReference type="CDD" id="cd00590">
    <property type="entry name" value="RRM_SF"/>
    <property type="match status" value="1"/>
</dbReference>
<dbReference type="FunFam" id="3.30.70.330:FF:001773">
    <property type="match status" value="1"/>
</dbReference>
<dbReference type="FunFam" id="3.10.450.50:FF:000003">
    <property type="entry name" value="Nuclear transport factor 2 family protein"/>
    <property type="match status" value="1"/>
</dbReference>
<dbReference type="Gene3D" id="3.10.450.50">
    <property type="match status" value="1"/>
</dbReference>
<dbReference type="Gene3D" id="3.30.70.330">
    <property type="match status" value="1"/>
</dbReference>
<dbReference type="InterPro" id="IPR032710">
    <property type="entry name" value="NTF2-like_dom_sf"/>
</dbReference>
<dbReference type="InterPro" id="IPR002075">
    <property type="entry name" value="NTF2_dom"/>
</dbReference>
<dbReference type="InterPro" id="IPR018222">
    <property type="entry name" value="Nuclear_transport_factor_2_euk"/>
</dbReference>
<dbReference type="InterPro" id="IPR012677">
    <property type="entry name" value="Nucleotide-bd_a/b_plait_sf"/>
</dbReference>
<dbReference type="InterPro" id="IPR039539">
    <property type="entry name" value="Ras_GTPase_bind_prot"/>
</dbReference>
<dbReference type="InterPro" id="IPR035979">
    <property type="entry name" value="RBD_domain_sf"/>
</dbReference>
<dbReference type="InterPro" id="IPR000504">
    <property type="entry name" value="RRM_dom"/>
</dbReference>
<dbReference type="PANTHER" id="PTHR10693:SF20">
    <property type="entry name" value="AT27578P"/>
    <property type="match status" value="1"/>
</dbReference>
<dbReference type="PANTHER" id="PTHR10693">
    <property type="entry name" value="RAS GTPASE-ACTIVATING PROTEIN-BINDING PROTEIN"/>
    <property type="match status" value="1"/>
</dbReference>
<dbReference type="Pfam" id="PF02136">
    <property type="entry name" value="NTF2"/>
    <property type="match status" value="1"/>
</dbReference>
<dbReference type="Pfam" id="PF00076">
    <property type="entry name" value="RRM_1"/>
    <property type="match status" value="1"/>
</dbReference>
<dbReference type="SMART" id="SM00360">
    <property type="entry name" value="RRM"/>
    <property type="match status" value="1"/>
</dbReference>
<dbReference type="SUPFAM" id="SSF54427">
    <property type="entry name" value="NTF2-like"/>
    <property type="match status" value="1"/>
</dbReference>
<dbReference type="SUPFAM" id="SSF54928">
    <property type="entry name" value="RNA-binding domain, RBD"/>
    <property type="match status" value="1"/>
</dbReference>
<dbReference type="PROSITE" id="PS50177">
    <property type="entry name" value="NTF2_DOMAIN"/>
    <property type="match status" value="1"/>
</dbReference>
<dbReference type="PROSITE" id="PS50102">
    <property type="entry name" value="RRM"/>
    <property type="match status" value="1"/>
</dbReference>
<evidence type="ECO:0000255" key="1">
    <source>
        <dbReference type="PROSITE-ProRule" id="PRU00137"/>
    </source>
</evidence>
<evidence type="ECO:0000255" key="2">
    <source>
        <dbReference type="PROSITE-ProRule" id="PRU00176"/>
    </source>
</evidence>
<evidence type="ECO:0000256" key="3">
    <source>
        <dbReference type="SAM" id="MobiDB-lite"/>
    </source>
</evidence>
<evidence type="ECO:0000269" key="4">
    <source>
    </source>
</evidence>
<evidence type="ECO:0000305" key="5"/>
<comment type="function">
    <text evidence="5">Probable scaffold protein that may be involved in mRNA transport.</text>
</comment>